<keyword id="KW-1185">Reference proteome</keyword>
<name>LNP1_MACFA</name>
<evidence type="ECO:0000256" key="1">
    <source>
        <dbReference type="SAM" id="MobiDB-lite"/>
    </source>
</evidence>
<proteinExistence type="evidence at transcript level"/>
<protein>
    <recommendedName>
        <fullName>Leukemia NUP98 fusion partner 1 homolog</fullName>
    </recommendedName>
</protein>
<sequence>MEHKDDDDDDVSFAKWMSSFWGHSWREEDQRGLRERHRPQATSHRKTSLPCPLPVLPRIPSSDRHPRRHSHEDQEFRCRSSDRLPRRHSHEDQKFRCRSHVRDYGEYSEDGSFKEPLESKGRSHSKIEKFSESFERQLCFRTKRSASLGPESRKERNERECLRMEIKSRKKVEEERSSRKEEHGEAHMAPLFEKGPE</sequence>
<reference key="1">
    <citation type="submission" date="2005-06" db="EMBL/GenBank/DDBJ databases">
        <title>DNA sequences of macaque genes expressed in brain or testis and its evolutionary implications.</title>
        <authorList>
            <consortium name="International consortium for macaque cDNA sequencing and analysis"/>
        </authorList>
    </citation>
    <scope>NUCLEOTIDE SEQUENCE [LARGE SCALE MRNA]</scope>
    <source>
        <tissue>Testis</tissue>
    </source>
</reference>
<dbReference type="EMBL" id="AB168577">
    <property type="protein sequence ID" value="BAE00691.1"/>
    <property type="molecule type" value="mRNA"/>
</dbReference>
<dbReference type="eggNOG" id="ENOG502S2J6">
    <property type="taxonomic scope" value="Eukaryota"/>
</dbReference>
<dbReference type="Proteomes" id="UP000233100">
    <property type="component" value="Unplaced"/>
</dbReference>
<dbReference type="InterPro" id="IPR029280">
    <property type="entry name" value="LNP1"/>
</dbReference>
<dbReference type="PANTHER" id="PTHR35667">
    <property type="entry name" value="LEUKEMIA NUP98 FUSION PARTNER 1"/>
    <property type="match status" value="1"/>
</dbReference>
<dbReference type="PANTHER" id="PTHR35667:SF1">
    <property type="entry name" value="LEUKEMIA NUP98 FUSION PARTNER 1"/>
    <property type="match status" value="1"/>
</dbReference>
<dbReference type="Pfam" id="PF15419">
    <property type="entry name" value="LNP1"/>
    <property type="match status" value="2"/>
</dbReference>
<feature type="chain" id="PRO_0000341358" description="Leukemia NUP98 fusion partner 1 homolog">
    <location>
        <begin position="1"/>
        <end position="197"/>
    </location>
</feature>
<feature type="region of interest" description="Disordered" evidence="1">
    <location>
        <begin position="28"/>
        <end position="128"/>
    </location>
</feature>
<feature type="region of interest" description="Disordered" evidence="1">
    <location>
        <begin position="167"/>
        <end position="197"/>
    </location>
</feature>
<feature type="compositionally biased region" description="Basic residues" evidence="1">
    <location>
        <begin position="34"/>
        <end position="47"/>
    </location>
</feature>
<feature type="compositionally biased region" description="Basic and acidic residues" evidence="1">
    <location>
        <begin position="70"/>
        <end position="128"/>
    </location>
</feature>
<feature type="compositionally biased region" description="Basic and acidic residues" evidence="1">
    <location>
        <begin position="167"/>
        <end position="186"/>
    </location>
</feature>
<accession>Q4R881</accession>
<gene>
    <name type="primary">LNP1</name>
    <name type="ORF">QtsA-13149</name>
</gene>
<organism>
    <name type="scientific">Macaca fascicularis</name>
    <name type="common">Crab-eating macaque</name>
    <name type="synonym">Cynomolgus monkey</name>
    <dbReference type="NCBI Taxonomy" id="9541"/>
    <lineage>
        <taxon>Eukaryota</taxon>
        <taxon>Metazoa</taxon>
        <taxon>Chordata</taxon>
        <taxon>Craniata</taxon>
        <taxon>Vertebrata</taxon>
        <taxon>Euteleostomi</taxon>
        <taxon>Mammalia</taxon>
        <taxon>Eutheria</taxon>
        <taxon>Euarchontoglires</taxon>
        <taxon>Primates</taxon>
        <taxon>Haplorrhini</taxon>
        <taxon>Catarrhini</taxon>
        <taxon>Cercopithecidae</taxon>
        <taxon>Cercopithecinae</taxon>
        <taxon>Macaca</taxon>
    </lineage>
</organism>